<name>ELOV7_DROME</name>
<sequence>MDYLTMFYDGWRDLMDNKSDPRTRDYPLMSSPFPTIAISLTYAYIVKVLGPKLMENRKPFELRKVLIVYNAAQVIFSAWLFYESCIGGWLNGYNLRCEPVNYSYSPKAIRTAEGCWWYYFSKFTEFFDTFFFVMRKRYDQVSTLHVIHHGIMPVSVWWGVKFTPGGHSTFFGFLNTFVHIFMYAYYMLAAMGPKVQKYLWWKKYLTVMQMIQFVLVMVHSFQLFFKNDCNYPIGFAYFIGAHAVMFYFLFSNFYKRAYVKRDGKDKASVKANGHANGHVKALKDGDVAPTSNGQANGFHNTFSKFTTDMCNPALNSSTRQRVLVNAGNK</sequence>
<keyword id="KW-0275">Fatty acid biosynthesis</keyword>
<keyword id="KW-0276">Fatty acid metabolism</keyword>
<keyword id="KW-0444">Lipid biosynthesis</keyword>
<keyword id="KW-0443">Lipid metabolism</keyword>
<keyword id="KW-0472">Membrane</keyword>
<keyword id="KW-1185">Reference proteome</keyword>
<keyword id="KW-0808">Transferase</keyword>
<keyword id="KW-0812">Transmembrane</keyword>
<keyword id="KW-1133">Transmembrane helix</keyword>
<protein>
    <recommendedName>
        <fullName evidence="5">Very long chain fatty acid elongase 7</fullName>
        <ecNumber evidence="1">2.3.1.199</ecNumber>
    </recommendedName>
    <alternativeName>
        <fullName evidence="8">ELOVL fatty acid elongase 7</fullName>
    </alternativeName>
    <alternativeName>
        <fullName>Elongation of very long chain fatty acids protein 7</fullName>
    </alternativeName>
    <alternativeName>
        <fullName evidence="4">Very-long-chain 3-oxoacyl-CoA synthase</fullName>
    </alternativeName>
</protein>
<proteinExistence type="evidence at transcript level"/>
<evidence type="ECO:0000250" key="1">
    <source>
        <dbReference type="UniProtKB" id="A1L3X0"/>
    </source>
</evidence>
<evidence type="ECO:0000255" key="2"/>
<evidence type="ECO:0000269" key="3">
    <source>
    </source>
</evidence>
<evidence type="ECO:0000303" key="4">
    <source>
    </source>
</evidence>
<evidence type="ECO:0000305" key="5"/>
<evidence type="ECO:0000312" key="6">
    <source>
        <dbReference type="EMBL" id="AAM51033.1"/>
    </source>
</evidence>
<evidence type="ECO:0000312" key="7">
    <source>
        <dbReference type="EMBL" id="AGV77164.1"/>
    </source>
</evidence>
<evidence type="ECO:0000312" key="8">
    <source>
        <dbReference type="FlyBase" id="FBgn0037534"/>
    </source>
</evidence>
<evidence type="ECO:0000312" key="9">
    <source>
        <dbReference type="Proteomes" id="UP000000803"/>
    </source>
</evidence>
<reference evidence="9" key="1">
    <citation type="journal article" date="2000" name="Science">
        <title>The genome sequence of Drosophila melanogaster.</title>
        <authorList>
            <person name="Adams M.D."/>
            <person name="Celniker S.E."/>
            <person name="Holt R.A."/>
            <person name="Evans C.A."/>
            <person name="Gocayne J.D."/>
            <person name="Amanatides P.G."/>
            <person name="Scherer S.E."/>
            <person name="Li P.W."/>
            <person name="Hoskins R.A."/>
            <person name="Galle R.F."/>
            <person name="George R.A."/>
            <person name="Lewis S.E."/>
            <person name="Richards S."/>
            <person name="Ashburner M."/>
            <person name="Henderson S.N."/>
            <person name="Sutton G.G."/>
            <person name="Wortman J.R."/>
            <person name="Yandell M.D."/>
            <person name="Zhang Q."/>
            <person name="Chen L.X."/>
            <person name="Brandon R.C."/>
            <person name="Rogers Y.-H.C."/>
            <person name="Blazej R.G."/>
            <person name="Champe M."/>
            <person name="Pfeiffer B.D."/>
            <person name="Wan K.H."/>
            <person name="Doyle C."/>
            <person name="Baxter E.G."/>
            <person name="Helt G."/>
            <person name="Nelson C.R."/>
            <person name="Miklos G.L.G."/>
            <person name="Abril J.F."/>
            <person name="Agbayani A."/>
            <person name="An H.-J."/>
            <person name="Andrews-Pfannkoch C."/>
            <person name="Baldwin D."/>
            <person name="Ballew R.M."/>
            <person name="Basu A."/>
            <person name="Baxendale J."/>
            <person name="Bayraktaroglu L."/>
            <person name="Beasley E.M."/>
            <person name="Beeson K.Y."/>
            <person name="Benos P.V."/>
            <person name="Berman B.P."/>
            <person name="Bhandari D."/>
            <person name="Bolshakov S."/>
            <person name="Borkova D."/>
            <person name="Botchan M.R."/>
            <person name="Bouck J."/>
            <person name="Brokstein P."/>
            <person name="Brottier P."/>
            <person name="Burtis K.C."/>
            <person name="Busam D.A."/>
            <person name="Butler H."/>
            <person name="Cadieu E."/>
            <person name="Center A."/>
            <person name="Chandra I."/>
            <person name="Cherry J.M."/>
            <person name="Cawley S."/>
            <person name="Dahlke C."/>
            <person name="Davenport L.B."/>
            <person name="Davies P."/>
            <person name="de Pablos B."/>
            <person name="Delcher A."/>
            <person name="Deng Z."/>
            <person name="Mays A.D."/>
            <person name="Dew I."/>
            <person name="Dietz S.M."/>
            <person name="Dodson K."/>
            <person name="Doup L.E."/>
            <person name="Downes M."/>
            <person name="Dugan-Rocha S."/>
            <person name="Dunkov B.C."/>
            <person name="Dunn P."/>
            <person name="Durbin K.J."/>
            <person name="Evangelista C.C."/>
            <person name="Ferraz C."/>
            <person name="Ferriera S."/>
            <person name="Fleischmann W."/>
            <person name="Fosler C."/>
            <person name="Gabrielian A.E."/>
            <person name="Garg N.S."/>
            <person name="Gelbart W.M."/>
            <person name="Glasser K."/>
            <person name="Glodek A."/>
            <person name="Gong F."/>
            <person name="Gorrell J.H."/>
            <person name="Gu Z."/>
            <person name="Guan P."/>
            <person name="Harris M."/>
            <person name="Harris N.L."/>
            <person name="Harvey D.A."/>
            <person name="Heiman T.J."/>
            <person name="Hernandez J.R."/>
            <person name="Houck J."/>
            <person name="Hostin D."/>
            <person name="Houston K.A."/>
            <person name="Howland T.J."/>
            <person name="Wei M.-H."/>
            <person name="Ibegwam C."/>
            <person name="Jalali M."/>
            <person name="Kalush F."/>
            <person name="Karpen G.H."/>
            <person name="Ke Z."/>
            <person name="Kennison J.A."/>
            <person name="Ketchum K.A."/>
            <person name="Kimmel B.E."/>
            <person name="Kodira C.D."/>
            <person name="Kraft C.L."/>
            <person name="Kravitz S."/>
            <person name="Kulp D."/>
            <person name="Lai Z."/>
            <person name="Lasko P."/>
            <person name="Lei Y."/>
            <person name="Levitsky A.A."/>
            <person name="Li J.H."/>
            <person name="Li Z."/>
            <person name="Liang Y."/>
            <person name="Lin X."/>
            <person name="Liu X."/>
            <person name="Mattei B."/>
            <person name="McIntosh T.C."/>
            <person name="McLeod M.P."/>
            <person name="McPherson D."/>
            <person name="Merkulov G."/>
            <person name="Milshina N.V."/>
            <person name="Mobarry C."/>
            <person name="Morris J."/>
            <person name="Moshrefi A."/>
            <person name="Mount S.M."/>
            <person name="Moy M."/>
            <person name="Murphy B."/>
            <person name="Murphy L."/>
            <person name="Muzny D.M."/>
            <person name="Nelson D.L."/>
            <person name="Nelson D.R."/>
            <person name="Nelson K.A."/>
            <person name="Nixon K."/>
            <person name="Nusskern D.R."/>
            <person name="Pacleb J.M."/>
            <person name="Palazzolo M."/>
            <person name="Pittman G.S."/>
            <person name="Pan S."/>
            <person name="Pollard J."/>
            <person name="Puri V."/>
            <person name="Reese M.G."/>
            <person name="Reinert K."/>
            <person name="Remington K."/>
            <person name="Saunders R.D.C."/>
            <person name="Scheeler F."/>
            <person name="Shen H."/>
            <person name="Shue B.C."/>
            <person name="Siden-Kiamos I."/>
            <person name="Simpson M."/>
            <person name="Skupski M.P."/>
            <person name="Smith T.J."/>
            <person name="Spier E."/>
            <person name="Spradling A.C."/>
            <person name="Stapleton M."/>
            <person name="Strong R."/>
            <person name="Sun E."/>
            <person name="Svirskas R."/>
            <person name="Tector C."/>
            <person name="Turner R."/>
            <person name="Venter E."/>
            <person name="Wang A.H."/>
            <person name="Wang X."/>
            <person name="Wang Z.-Y."/>
            <person name="Wassarman D.A."/>
            <person name="Weinstock G.M."/>
            <person name="Weissenbach J."/>
            <person name="Williams S.M."/>
            <person name="Woodage T."/>
            <person name="Worley K.C."/>
            <person name="Wu D."/>
            <person name="Yang S."/>
            <person name="Yao Q.A."/>
            <person name="Ye J."/>
            <person name="Yeh R.-F."/>
            <person name="Zaveri J.S."/>
            <person name="Zhan M."/>
            <person name="Zhang G."/>
            <person name="Zhao Q."/>
            <person name="Zheng L."/>
            <person name="Zheng X.H."/>
            <person name="Zhong F.N."/>
            <person name="Zhong W."/>
            <person name="Zhou X."/>
            <person name="Zhu S.C."/>
            <person name="Zhu X."/>
            <person name="Smith H.O."/>
            <person name="Gibbs R.A."/>
            <person name="Myers E.W."/>
            <person name="Rubin G.M."/>
            <person name="Venter J.C."/>
        </authorList>
    </citation>
    <scope>NUCLEOTIDE SEQUENCE [LARGE SCALE GENOMIC DNA]</scope>
    <source>
        <strain evidence="9">Berkeley</strain>
    </source>
</reference>
<reference evidence="9" key="2">
    <citation type="journal article" date="2002" name="Genome Biol.">
        <title>Annotation of the Drosophila melanogaster euchromatic genome: a systematic review.</title>
        <authorList>
            <person name="Misra S."/>
            <person name="Crosby M.A."/>
            <person name="Mungall C.J."/>
            <person name="Matthews B.B."/>
            <person name="Campbell K.S."/>
            <person name="Hradecky P."/>
            <person name="Huang Y."/>
            <person name="Kaminker J.S."/>
            <person name="Millburn G.H."/>
            <person name="Prochnik S.E."/>
            <person name="Smith C.D."/>
            <person name="Tupy J.L."/>
            <person name="Whitfield E.J."/>
            <person name="Bayraktaroglu L."/>
            <person name="Berman B.P."/>
            <person name="Bettencourt B.R."/>
            <person name="Celniker S.E."/>
            <person name="de Grey A.D.N.J."/>
            <person name="Drysdale R.A."/>
            <person name="Harris N.L."/>
            <person name="Richter J."/>
            <person name="Russo S."/>
            <person name="Schroeder A.J."/>
            <person name="Shu S.Q."/>
            <person name="Stapleton M."/>
            <person name="Yamada C."/>
            <person name="Ashburner M."/>
            <person name="Gelbart W.M."/>
            <person name="Rubin G.M."/>
            <person name="Lewis S.E."/>
        </authorList>
    </citation>
    <scope>GENOME REANNOTATION</scope>
    <source>
        <strain evidence="9">Berkeley</strain>
    </source>
</reference>
<reference evidence="6" key="3">
    <citation type="journal article" date="2002" name="Genome Biol.">
        <title>A Drosophila full-length cDNA resource.</title>
        <authorList>
            <person name="Stapleton M."/>
            <person name="Carlson J.W."/>
            <person name="Brokstein P."/>
            <person name="Yu C."/>
            <person name="Champe M."/>
            <person name="George R.A."/>
            <person name="Guarin H."/>
            <person name="Kronmiller B."/>
            <person name="Pacleb J.M."/>
            <person name="Park S."/>
            <person name="Wan K.H."/>
            <person name="Rubin G.M."/>
            <person name="Celniker S.E."/>
        </authorList>
    </citation>
    <scope>NUCLEOTIDE SEQUENCE [LARGE SCALE MRNA]</scope>
    <source>
        <strain evidence="6">Berkeley</strain>
        <tissue evidence="6">Head</tissue>
    </source>
</reference>
<reference evidence="7" key="4">
    <citation type="submission" date="2013-09" db="EMBL/GenBank/DDBJ databases">
        <authorList>
            <person name="Carlson J."/>
            <person name="Booth B."/>
            <person name="Frise E."/>
            <person name="Park S."/>
            <person name="Wan K."/>
            <person name="Yu C."/>
            <person name="Celniker S."/>
        </authorList>
    </citation>
    <scope>NUCLEOTIDE SEQUENCE [LARGE SCALE MRNA]</scope>
</reference>
<reference evidence="5" key="5">
    <citation type="journal article" date="2018" name="Dis. Model. Mech.">
        <title>Etiology and treatment of adrenoleukodystrophy: new insights from Drosophila.</title>
        <authorList>
            <person name="Gordon H.B."/>
            <person name="Valdez L."/>
            <person name="Letsou A."/>
        </authorList>
    </citation>
    <scope>DISRUPTION PHENOTYPE</scope>
</reference>
<gene>
    <name evidence="8" type="primary">Elovl7</name>
    <name evidence="4" type="synonym">ELOVL</name>
    <name evidence="8" type="ORF">CG2781</name>
</gene>
<comment type="function">
    <text evidence="5">Catalyzes the first and rate-limiting reaction of the four reactions that constitute the long-chain fatty acids elongation cycle. This endoplasmic reticulum-bound enzymatic process allows the addition of 2 carbons to the chain of long- and very long-chain fatty acids (VLCFAs) per cycle.</text>
</comment>
<comment type="catalytic activity">
    <reaction evidence="1">
        <text>a very-long-chain acyl-CoA + malonyl-CoA + H(+) = a very-long-chain 3-oxoacyl-CoA + CO2 + CoA</text>
        <dbReference type="Rhea" id="RHEA:32727"/>
        <dbReference type="ChEBI" id="CHEBI:15378"/>
        <dbReference type="ChEBI" id="CHEBI:16526"/>
        <dbReference type="ChEBI" id="CHEBI:57287"/>
        <dbReference type="ChEBI" id="CHEBI:57384"/>
        <dbReference type="ChEBI" id="CHEBI:90725"/>
        <dbReference type="ChEBI" id="CHEBI:90736"/>
        <dbReference type="EC" id="2.3.1.199"/>
    </reaction>
</comment>
<comment type="subcellular location">
    <subcellularLocation>
        <location evidence="5">Membrane</location>
        <topology evidence="2">Multi-pass membrane protein</topology>
    </subcellularLocation>
</comment>
<comment type="disruption phenotype">
    <text evidence="3">RNAi-mediated knockdown leads to lethality before eclosion (PubMed:29739804). RNAi-mediated knockdown in neurons leads to neurodegeneration in the central nervous system including degeneration of retina, defects in the fenestrated basement membrane and ommatidial disarray (PubMed:29739804). Effects are probably due to altered levels of very-long chain fatty acids (VLCFAs) (PubMed:29739804). In contrast, glial-specific RNAi-mediated knockdown results in no defect (PubMed:29739804).</text>
</comment>
<comment type="similarity">
    <text evidence="5">Belongs to the ELO family.</text>
</comment>
<dbReference type="EC" id="2.3.1.199" evidence="1"/>
<dbReference type="EMBL" id="AE014297">
    <property type="protein sequence ID" value="AAF54172.2"/>
    <property type="molecule type" value="Genomic_DNA"/>
</dbReference>
<dbReference type="EMBL" id="AY119173">
    <property type="protein sequence ID" value="AAM51033.1"/>
    <property type="molecule type" value="mRNA"/>
</dbReference>
<dbReference type="EMBL" id="BT150262">
    <property type="protein sequence ID" value="AGV77164.1"/>
    <property type="molecule type" value="mRNA"/>
</dbReference>
<dbReference type="RefSeq" id="NP_649754.1">
    <property type="nucleotide sequence ID" value="NM_141497.2"/>
</dbReference>
<dbReference type="SMR" id="Q9VHX7"/>
<dbReference type="FunCoup" id="Q9VHX7">
    <property type="interactions" value="94"/>
</dbReference>
<dbReference type="IntAct" id="Q9VHX7">
    <property type="interactions" value="26"/>
</dbReference>
<dbReference type="STRING" id="7227.FBpp0081313"/>
<dbReference type="PaxDb" id="7227-FBpp0081313"/>
<dbReference type="EnsemblMetazoa" id="FBtr0081823">
    <property type="protein sequence ID" value="FBpp0081313"/>
    <property type="gene ID" value="FBgn0037534"/>
</dbReference>
<dbReference type="GeneID" id="40943"/>
<dbReference type="KEGG" id="dme:Dmel_CG2781"/>
<dbReference type="UCSC" id="CG2781-RA">
    <property type="organism name" value="d. melanogaster"/>
</dbReference>
<dbReference type="AGR" id="FB:FBgn0037534"/>
<dbReference type="CTD" id="79993"/>
<dbReference type="FlyBase" id="FBgn0037534">
    <property type="gene designation" value="Elovl7"/>
</dbReference>
<dbReference type="VEuPathDB" id="VectorBase:FBgn0037534"/>
<dbReference type="eggNOG" id="KOG3071">
    <property type="taxonomic scope" value="Eukaryota"/>
</dbReference>
<dbReference type="GeneTree" id="ENSGT01050000244838"/>
<dbReference type="HOGENOM" id="CLU_048483_0_0_1"/>
<dbReference type="InParanoid" id="Q9VHX7"/>
<dbReference type="OMA" id="YSTTRHR"/>
<dbReference type="OrthoDB" id="434092at2759"/>
<dbReference type="PhylomeDB" id="Q9VHX7"/>
<dbReference type="Reactome" id="R-DME-75876">
    <property type="pathway name" value="Synthesis of very long-chain fatty acyl-CoAs"/>
</dbReference>
<dbReference type="BioGRID-ORCS" id="40943">
    <property type="hits" value="0 hits in 3 CRISPR screens"/>
</dbReference>
<dbReference type="GenomeRNAi" id="40943"/>
<dbReference type="PRO" id="PR:Q9VHX7"/>
<dbReference type="Proteomes" id="UP000000803">
    <property type="component" value="Chromosome 3R"/>
</dbReference>
<dbReference type="Bgee" id="FBgn0037534">
    <property type="expression patterns" value="Expressed in nociceptive neuron in imaginal disc-derived wing and 181 other cell types or tissues"/>
</dbReference>
<dbReference type="GO" id="GO:0005789">
    <property type="term" value="C:endoplasmic reticulum membrane"/>
    <property type="evidence" value="ECO:0000318"/>
    <property type="project" value="GO_Central"/>
</dbReference>
<dbReference type="GO" id="GO:0009922">
    <property type="term" value="F:fatty acid elongase activity"/>
    <property type="evidence" value="ECO:0000250"/>
    <property type="project" value="FlyBase"/>
</dbReference>
<dbReference type="GO" id="GO:0030497">
    <property type="term" value="P:fatty acid elongation"/>
    <property type="evidence" value="ECO:0000250"/>
    <property type="project" value="FlyBase"/>
</dbReference>
<dbReference type="GO" id="GO:0034625">
    <property type="term" value="P:fatty acid elongation, monounsaturated fatty acid"/>
    <property type="evidence" value="ECO:0000318"/>
    <property type="project" value="GO_Central"/>
</dbReference>
<dbReference type="GO" id="GO:0034626">
    <property type="term" value="P:fatty acid elongation, polyunsaturated fatty acid"/>
    <property type="evidence" value="ECO:0000318"/>
    <property type="project" value="GO_Central"/>
</dbReference>
<dbReference type="GO" id="GO:0019367">
    <property type="term" value="P:fatty acid elongation, saturated fatty acid"/>
    <property type="evidence" value="ECO:0000318"/>
    <property type="project" value="GO_Central"/>
</dbReference>
<dbReference type="GO" id="GO:0001676">
    <property type="term" value="P:long-chain fatty acid metabolic process"/>
    <property type="evidence" value="ECO:0000315"/>
    <property type="project" value="UniProtKB"/>
</dbReference>
<dbReference type="GO" id="GO:0030148">
    <property type="term" value="P:sphingolipid biosynthetic process"/>
    <property type="evidence" value="ECO:0000318"/>
    <property type="project" value="GO_Central"/>
</dbReference>
<dbReference type="GO" id="GO:0042761">
    <property type="term" value="P:very long-chain fatty acid biosynthetic process"/>
    <property type="evidence" value="ECO:0000318"/>
    <property type="project" value="GO_Central"/>
</dbReference>
<dbReference type="InterPro" id="IPR002076">
    <property type="entry name" value="ELO_fam"/>
</dbReference>
<dbReference type="PANTHER" id="PTHR11157:SF69">
    <property type="entry name" value="ELONGATION OF VERY LONG CHAIN FATTY ACIDS PROTEIN 7"/>
    <property type="match status" value="1"/>
</dbReference>
<dbReference type="PANTHER" id="PTHR11157">
    <property type="entry name" value="FATTY ACID ACYL TRANSFERASE-RELATED"/>
    <property type="match status" value="1"/>
</dbReference>
<dbReference type="Pfam" id="PF01151">
    <property type="entry name" value="ELO"/>
    <property type="match status" value="1"/>
</dbReference>
<feature type="chain" id="PRO_0000447648" description="Very long chain fatty acid elongase 7">
    <location>
        <begin position="1"/>
        <end position="329"/>
    </location>
</feature>
<feature type="transmembrane region" description="Helical" evidence="2">
    <location>
        <begin position="26"/>
        <end position="46"/>
    </location>
</feature>
<feature type="transmembrane region" description="Helical" evidence="2">
    <location>
        <begin position="66"/>
        <end position="86"/>
    </location>
</feature>
<feature type="transmembrane region" description="Helical" evidence="2">
    <location>
        <begin position="114"/>
        <end position="134"/>
    </location>
</feature>
<feature type="transmembrane region" description="Helical" evidence="2">
    <location>
        <begin position="146"/>
        <end position="166"/>
    </location>
</feature>
<feature type="transmembrane region" description="Helical" evidence="2">
    <location>
        <begin position="170"/>
        <end position="190"/>
    </location>
</feature>
<feature type="transmembrane region" description="Helical" evidence="2">
    <location>
        <begin position="205"/>
        <end position="225"/>
    </location>
</feature>
<feature type="transmembrane region" description="Helical" evidence="2">
    <location>
        <begin position="233"/>
        <end position="253"/>
    </location>
</feature>
<feature type="sequence conflict" description="In Ref. 3; AAM51033." evidence="5" ref="3">
    <original>P</original>
    <variation>L</variation>
    <location>
        <position position="21"/>
    </location>
</feature>
<feature type="sequence conflict" description="In Ref. 3; AAM51033." evidence="5" ref="3">
    <original>I</original>
    <variation>V</variation>
    <location>
        <position position="45"/>
    </location>
</feature>
<organism evidence="9">
    <name type="scientific">Drosophila melanogaster</name>
    <name type="common">Fruit fly</name>
    <dbReference type="NCBI Taxonomy" id="7227"/>
    <lineage>
        <taxon>Eukaryota</taxon>
        <taxon>Metazoa</taxon>
        <taxon>Ecdysozoa</taxon>
        <taxon>Arthropoda</taxon>
        <taxon>Hexapoda</taxon>
        <taxon>Insecta</taxon>
        <taxon>Pterygota</taxon>
        <taxon>Neoptera</taxon>
        <taxon>Endopterygota</taxon>
        <taxon>Diptera</taxon>
        <taxon>Brachycera</taxon>
        <taxon>Muscomorpha</taxon>
        <taxon>Ephydroidea</taxon>
        <taxon>Drosophilidae</taxon>
        <taxon>Drosophila</taxon>
        <taxon>Sophophora</taxon>
    </lineage>
</organism>
<accession>Q9VHX7</accession>
<accession>Q8MS02</accession>